<gene>
    <name type="primary">NAT9</name>
    <name type="synonym">EBS</name>
</gene>
<protein>
    <recommendedName>
        <fullName evidence="7">Alpha/beta-tubulin-N-acetyltransferase 9</fullName>
        <ecNumber evidence="1">2.3.1.308</ecNumber>
    </recommendedName>
    <alternativeName>
        <fullName>Embryo brain-specific protein</fullName>
    </alternativeName>
</protein>
<organism>
    <name type="scientific">Homo sapiens</name>
    <name type="common">Human</name>
    <dbReference type="NCBI Taxonomy" id="9606"/>
    <lineage>
        <taxon>Eukaryota</taxon>
        <taxon>Metazoa</taxon>
        <taxon>Chordata</taxon>
        <taxon>Craniata</taxon>
        <taxon>Vertebrata</taxon>
        <taxon>Euteleostomi</taxon>
        <taxon>Mammalia</taxon>
        <taxon>Eutheria</taxon>
        <taxon>Euarchontoglires</taxon>
        <taxon>Primates</taxon>
        <taxon>Haplorrhini</taxon>
        <taxon>Catarrhini</taxon>
        <taxon>Hominidae</taxon>
        <taxon>Homo</taxon>
    </lineage>
</organism>
<proteinExistence type="evidence at protein level"/>
<reference key="1">
    <citation type="submission" date="2004-05" db="EMBL/GenBank/DDBJ databases">
        <title>Molecular cloning and primary studies on EBS: a novel human embryo brain-specific gene.</title>
        <authorList>
            <person name="Chen W."/>
            <person name="Zou X."/>
            <person name="Zhang J."/>
            <person name="Ci H.L."/>
            <person name="Li Y.P."/>
        </authorList>
    </citation>
    <scope>NUCLEOTIDE SEQUENCE [MRNA] (ISOFORM 2)</scope>
</reference>
<reference key="2">
    <citation type="journal article" date="2004" name="Nat. Genet.">
        <title>Complete sequencing and characterization of 21,243 full-length human cDNAs.</title>
        <authorList>
            <person name="Ota T."/>
            <person name="Suzuki Y."/>
            <person name="Nishikawa T."/>
            <person name="Otsuki T."/>
            <person name="Sugiyama T."/>
            <person name="Irie R."/>
            <person name="Wakamatsu A."/>
            <person name="Hayashi K."/>
            <person name="Sato H."/>
            <person name="Nagai K."/>
            <person name="Kimura K."/>
            <person name="Makita H."/>
            <person name="Sekine M."/>
            <person name="Obayashi M."/>
            <person name="Nishi T."/>
            <person name="Shibahara T."/>
            <person name="Tanaka T."/>
            <person name="Ishii S."/>
            <person name="Yamamoto J."/>
            <person name="Saito K."/>
            <person name="Kawai Y."/>
            <person name="Isono Y."/>
            <person name="Nakamura Y."/>
            <person name="Nagahari K."/>
            <person name="Murakami K."/>
            <person name="Yasuda T."/>
            <person name="Iwayanagi T."/>
            <person name="Wagatsuma M."/>
            <person name="Shiratori A."/>
            <person name="Sudo H."/>
            <person name="Hosoiri T."/>
            <person name="Kaku Y."/>
            <person name="Kodaira H."/>
            <person name="Kondo H."/>
            <person name="Sugawara M."/>
            <person name="Takahashi M."/>
            <person name="Kanda K."/>
            <person name="Yokoi T."/>
            <person name="Furuya T."/>
            <person name="Kikkawa E."/>
            <person name="Omura Y."/>
            <person name="Abe K."/>
            <person name="Kamihara K."/>
            <person name="Katsuta N."/>
            <person name="Sato K."/>
            <person name="Tanikawa M."/>
            <person name="Yamazaki M."/>
            <person name="Ninomiya K."/>
            <person name="Ishibashi T."/>
            <person name="Yamashita H."/>
            <person name="Murakawa K."/>
            <person name="Fujimori K."/>
            <person name="Tanai H."/>
            <person name="Kimata M."/>
            <person name="Watanabe M."/>
            <person name="Hiraoka S."/>
            <person name="Chiba Y."/>
            <person name="Ishida S."/>
            <person name="Ono Y."/>
            <person name="Takiguchi S."/>
            <person name="Watanabe S."/>
            <person name="Yosida M."/>
            <person name="Hotuta T."/>
            <person name="Kusano J."/>
            <person name="Kanehori K."/>
            <person name="Takahashi-Fujii A."/>
            <person name="Hara H."/>
            <person name="Tanase T.-O."/>
            <person name="Nomura Y."/>
            <person name="Togiya S."/>
            <person name="Komai F."/>
            <person name="Hara R."/>
            <person name="Takeuchi K."/>
            <person name="Arita M."/>
            <person name="Imose N."/>
            <person name="Musashino K."/>
            <person name="Yuuki H."/>
            <person name="Oshima A."/>
            <person name="Sasaki N."/>
            <person name="Aotsuka S."/>
            <person name="Yoshikawa Y."/>
            <person name="Matsunawa H."/>
            <person name="Ichihara T."/>
            <person name="Shiohata N."/>
            <person name="Sano S."/>
            <person name="Moriya S."/>
            <person name="Momiyama H."/>
            <person name="Satoh N."/>
            <person name="Takami S."/>
            <person name="Terashima Y."/>
            <person name="Suzuki O."/>
            <person name="Nakagawa S."/>
            <person name="Senoh A."/>
            <person name="Mizoguchi H."/>
            <person name="Goto Y."/>
            <person name="Shimizu F."/>
            <person name="Wakebe H."/>
            <person name="Hishigaki H."/>
            <person name="Watanabe T."/>
            <person name="Sugiyama A."/>
            <person name="Takemoto M."/>
            <person name="Kawakami B."/>
            <person name="Yamazaki M."/>
            <person name="Watanabe K."/>
            <person name="Kumagai A."/>
            <person name="Itakura S."/>
            <person name="Fukuzumi Y."/>
            <person name="Fujimori Y."/>
            <person name="Komiyama M."/>
            <person name="Tashiro H."/>
            <person name="Tanigami A."/>
            <person name="Fujiwara T."/>
            <person name="Ono T."/>
            <person name="Yamada K."/>
            <person name="Fujii Y."/>
            <person name="Ozaki K."/>
            <person name="Hirao M."/>
            <person name="Ohmori Y."/>
            <person name="Kawabata A."/>
            <person name="Hikiji T."/>
            <person name="Kobatake N."/>
            <person name="Inagaki H."/>
            <person name="Ikema Y."/>
            <person name="Okamoto S."/>
            <person name="Okitani R."/>
            <person name="Kawakami T."/>
            <person name="Noguchi S."/>
            <person name="Itoh T."/>
            <person name="Shigeta K."/>
            <person name="Senba T."/>
            <person name="Matsumura K."/>
            <person name="Nakajima Y."/>
            <person name="Mizuno T."/>
            <person name="Morinaga M."/>
            <person name="Sasaki M."/>
            <person name="Togashi T."/>
            <person name="Oyama M."/>
            <person name="Hata H."/>
            <person name="Watanabe M."/>
            <person name="Komatsu T."/>
            <person name="Mizushima-Sugano J."/>
            <person name="Satoh T."/>
            <person name="Shirai Y."/>
            <person name="Takahashi Y."/>
            <person name="Nakagawa K."/>
            <person name="Okumura K."/>
            <person name="Nagase T."/>
            <person name="Nomura N."/>
            <person name="Kikuchi H."/>
            <person name="Masuho Y."/>
            <person name="Yamashita R."/>
            <person name="Nakai K."/>
            <person name="Yada T."/>
            <person name="Nakamura Y."/>
            <person name="Ohara O."/>
            <person name="Isogai T."/>
            <person name="Sugano S."/>
        </authorList>
    </citation>
    <scope>NUCLEOTIDE SEQUENCE [LARGE SCALE MRNA] (ISOFORM 2)</scope>
    <source>
        <tissue>Adrenal gland</tissue>
    </source>
</reference>
<reference key="3">
    <citation type="journal article" date="2007" name="BMC Genomics">
        <title>The full-ORF clone resource of the German cDNA consortium.</title>
        <authorList>
            <person name="Bechtel S."/>
            <person name="Rosenfelder H."/>
            <person name="Duda A."/>
            <person name="Schmidt C.P."/>
            <person name="Ernst U."/>
            <person name="Wellenreuther R."/>
            <person name="Mehrle A."/>
            <person name="Schuster C."/>
            <person name="Bahr A."/>
            <person name="Bloecker H."/>
            <person name="Heubner D."/>
            <person name="Hoerlein A."/>
            <person name="Michel G."/>
            <person name="Wedler H."/>
            <person name="Koehrer K."/>
            <person name="Ottenwaelder B."/>
            <person name="Poustka A."/>
            <person name="Wiemann S."/>
            <person name="Schupp I."/>
        </authorList>
    </citation>
    <scope>NUCLEOTIDE SEQUENCE [LARGE SCALE MRNA] (ISOFORM 2)</scope>
    <source>
        <tissue>Brain</tissue>
    </source>
</reference>
<reference key="4">
    <citation type="submission" date="2005-07" db="EMBL/GenBank/DDBJ databases">
        <authorList>
            <person name="Mural R.J."/>
            <person name="Istrail S."/>
            <person name="Sutton G.G."/>
            <person name="Florea L."/>
            <person name="Halpern A.L."/>
            <person name="Mobarry C.M."/>
            <person name="Lippert R."/>
            <person name="Walenz B."/>
            <person name="Shatkay H."/>
            <person name="Dew I."/>
            <person name="Miller J.R."/>
            <person name="Flanigan M.J."/>
            <person name="Edwards N.J."/>
            <person name="Bolanos R."/>
            <person name="Fasulo D."/>
            <person name="Halldorsson B.V."/>
            <person name="Hannenhalli S."/>
            <person name="Turner R."/>
            <person name="Yooseph S."/>
            <person name="Lu F."/>
            <person name="Nusskern D.R."/>
            <person name="Shue B.C."/>
            <person name="Zheng X.H."/>
            <person name="Zhong F."/>
            <person name="Delcher A.L."/>
            <person name="Huson D.H."/>
            <person name="Kravitz S.A."/>
            <person name="Mouchard L."/>
            <person name="Reinert K."/>
            <person name="Remington K.A."/>
            <person name="Clark A.G."/>
            <person name="Waterman M.S."/>
            <person name="Eichler E.E."/>
            <person name="Adams M.D."/>
            <person name="Hunkapiller M.W."/>
            <person name="Myers E.W."/>
            <person name="Venter J.C."/>
        </authorList>
    </citation>
    <scope>NUCLEOTIDE SEQUENCE [LARGE SCALE GENOMIC DNA]</scope>
</reference>
<reference key="5">
    <citation type="journal article" date="2004" name="Genome Res.">
        <title>The status, quality, and expansion of the NIH full-length cDNA project: the Mammalian Gene Collection (MGC).</title>
        <authorList>
            <consortium name="The MGC Project Team"/>
        </authorList>
    </citation>
    <scope>NUCLEOTIDE SEQUENCE [LARGE SCALE MRNA] (ISOFORMS 1 AND 2)</scope>
    <source>
        <tissue>Lung</tissue>
        <tissue>Muscle</tissue>
    </source>
</reference>
<reference key="6">
    <citation type="journal article" date="2021" name="Proc. Natl. Acad. Sci. U.S.A.">
        <title>Novel function of N-acetyltransferase for microtubule stability and JNK signaling in Drosophila organ development.</title>
        <authorList>
            <person name="Mok J.W."/>
            <person name="Choi K.W."/>
        </authorList>
    </citation>
    <scope>FUNCTION</scope>
    <scope>CATALYTIC ACTIVITY</scope>
</reference>
<feature type="chain" id="PRO_0000286874" description="Alpha/beta-tubulin-N-acetyltransferase 9">
    <location>
        <begin position="1"/>
        <end position="207"/>
    </location>
</feature>
<feature type="domain" description="N-acetyltransferase">
    <location>
        <begin position="35"/>
        <end position="180"/>
    </location>
</feature>
<feature type="splice variant" id="VSP_025231" description="In isoform 2." evidence="2 3 4 5">
    <location>
        <position position="26"/>
    </location>
</feature>
<feature type="sequence variant" id="VAR_032225" description="In dbSNP:rs2305213.">
    <original>C</original>
    <variation>R</variation>
    <location>
        <position position="56"/>
    </location>
</feature>
<feature type="sequence conflict" description="In Ref. 3; CAB43370." evidence="6" ref="3">
    <original>L</original>
    <variation>P</variation>
    <location>
        <position position="126"/>
    </location>
</feature>
<accession>Q9BTE0</accession>
<accession>B2R7F0</accession>
<accession>Q9BTD0</accession>
<accession>Q9Y3T3</accession>
<dbReference type="EC" id="2.3.1.308" evidence="1"/>
<dbReference type="EMBL" id="AY632082">
    <property type="protein sequence ID" value="AAU25819.1"/>
    <property type="molecule type" value="mRNA"/>
</dbReference>
<dbReference type="EMBL" id="AK312958">
    <property type="protein sequence ID" value="BAG35797.1"/>
    <property type="molecule type" value="mRNA"/>
</dbReference>
<dbReference type="EMBL" id="AL050269">
    <property type="protein sequence ID" value="CAB43370.1"/>
    <property type="molecule type" value="mRNA"/>
</dbReference>
<dbReference type="EMBL" id="CH471099">
    <property type="protein sequence ID" value="EAW89197.1"/>
    <property type="molecule type" value="Genomic_DNA"/>
</dbReference>
<dbReference type="EMBL" id="BC004195">
    <property type="protein sequence ID" value="AAH04195.1"/>
    <property type="molecule type" value="mRNA"/>
</dbReference>
<dbReference type="EMBL" id="BC004225">
    <property type="protein sequence ID" value="AAH04225.1"/>
    <property type="molecule type" value="mRNA"/>
</dbReference>
<dbReference type="CCDS" id="CCDS11706.1">
    <molecule id="Q9BTE0-1"/>
</dbReference>
<dbReference type="CCDS" id="CCDS77102.1">
    <molecule id="Q9BTE0-2"/>
</dbReference>
<dbReference type="PIR" id="T08699">
    <property type="entry name" value="T08699"/>
</dbReference>
<dbReference type="RefSeq" id="NP_001292006.1">
    <molecule id="Q9BTE0-2"/>
    <property type="nucleotide sequence ID" value="NM_001305077.2"/>
</dbReference>
<dbReference type="RefSeq" id="NP_001292007.1">
    <molecule id="Q9BTE0-1"/>
    <property type="nucleotide sequence ID" value="NM_001305078.2"/>
</dbReference>
<dbReference type="RefSeq" id="NP_001292008.1">
    <property type="nucleotide sequence ID" value="NM_001305079.1"/>
</dbReference>
<dbReference type="RefSeq" id="NP_001292009.1">
    <property type="nucleotide sequence ID" value="NM_001305080.1"/>
</dbReference>
<dbReference type="RefSeq" id="NP_001292010.1">
    <property type="nucleotide sequence ID" value="NM_001305081.1"/>
</dbReference>
<dbReference type="RefSeq" id="NP_001292011.1">
    <property type="nucleotide sequence ID" value="NM_001305082.1"/>
</dbReference>
<dbReference type="RefSeq" id="NP_001292012.1">
    <property type="nucleotide sequence ID" value="NM_001305083.1"/>
</dbReference>
<dbReference type="RefSeq" id="NP_001292013.1">
    <property type="nucleotide sequence ID" value="NM_001305084.1"/>
</dbReference>
<dbReference type="RefSeq" id="NP_001292014.1">
    <property type="nucleotide sequence ID" value="NM_001305085.1"/>
</dbReference>
<dbReference type="RefSeq" id="NP_001292015.1">
    <property type="nucleotide sequence ID" value="NM_001305086.1"/>
</dbReference>
<dbReference type="RefSeq" id="NP_001292016.1">
    <property type="nucleotide sequence ID" value="NM_001305087.1"/>
</dbReference>
<dbReference type="RefSeq" id="NP_001292017.1">
    <property type="nucleotide sequence ID" value="NM_001305088.1"/>
</dbReference>
<dbReference type="RefSeq" id="NP_056469.2">
    <molecule id="Q9BTE0-1"/>
    <property type="nucleotide sequence ID" value="NM_015654.4"/>
</dbReference>
<dbReference type="RefSeq" id="XP_024306455.1">
    <molecule id="Q9BTE0-2"/>
    <property type="nucleotide sequence ID" value="XM_024450687.2"/>
</dbReference>
<dbReference type="SMR" id="Q9BTE0"/>
<dbReference type="BioGRID" id="117582">
    <property type="interactions" value="21"/>
</dbReference>
<dbReference type="FunCoup" id="Q9BTE0">
    <property type="interactions" value="147"/>
</dbReference>
<dbReference type="IntAct" id="Q9BTE0">
    <property type="interactions" value="15"/>
</dbReference>
<dbReference type="MINT" id="Q9BTE0"/>
<dbReference type="STRING" id="9606.ENSP00000462835"/>
<dbReference type="iPTMnet" id="Q9BTE0"/>
<dbReference type="PhosphoSitePlus" id="Q9BTE0"/>
<dbReference type="BioMuta" id="NAT9"/>
<dbReference type="DMDM" id="74752333"/>
<dbReference type="jPOST" id="Q9BTE0"/>
<dbReference type="MassIVE" id="Q9BTE0"/>
<dbReference type="PaxDb" id="9606-ENSP00000350467"/>
<dbReference type="PeptideAtlas" id="Q9BTE0"/>
<dbReference type="ProteomicsDB" id="78979">
    <molecule id="Q9BTE0-1"/>
</dbReference>
<dbReference type="ProteomicsDB" id="78980">
    <molecule id="Q9BTE0-2"/>
</dbReference>
<dbReference type="Pumba" id="Q9BTE0"/>
<dbReference type="Antibodypedia" id="19466">
    <property type="antibodies" value="65 antibodies from 19 providers"/>
</dbReference>
<dbReference type="DNASU" id="26151"/>
<dbReference type="Ensembl" id="ENST00000357814.8">
    <molecule id="Q9BTE0-1"/>
    <property type="protein sequence ID" value="ENSP00000350467.3"/>
    <property type="gene ID" value="ENSG00000109065.12"/>
</dbReference>
<dbReference type="Ensembl" id="ENST00000580301.5">
    <molecule id="Q9BTE0-2"/>
    <property type="protein sequence ID" value="ENSP00000462019.1"/>
    <property type="gene ID" value="ENSG00000109065.12"/>
</dbReference>
<dbReference type="GeneID" id="26151"/>
<dbReference type="KEGG" id="hsa:26151"/>
<dbReference type="MANE-Select" id="ENST00000357814.8">
    <property type="protein sequence ID" value="ENSP00000350467.3"/>
    <property type="RefSeq nucleotide sequence ID" value="NM_015654.5"/>
    <property type="RefSeq protein sequence ID" value="NP_056469.2"/>
</dbReference>
<dbReference type="UCSC" id="uc002jlq.3">
    <molecule id="Q9BTE0-1"/>
    <property type="organism name" value="human"/>
</dbReference>
<dbReference type="AGR" id="HGNC:23133"/>
<dbReference type="CTD" id="26151"/>
<dbReference type="DisGeNET" id="26151"/>
<dbReference type="GeneCards" id="NAT9"/>
<dbReference type="HGNC" id="HGNC:23133">
    <property type="gene designation" value="NAT9"/>
</dbReference>
<dbReference type="HPA" id="ENSG00000109065">
    <property type="expression patterns" value="Low tissue specificity"/>
</dbReference>
<dbReference type="MIM" id="620913">
    <property type="type" value="gene"/>
</dbReference>
<dbReference type="neXtProt" id="NX_Q9BTE0"/>
<dbReference type="OpenTargets" id="ENSG00000109065"/>
<dbReference type="PharmGKB" id="PA142671281"/>
<dbReference type="VEuPathDB" id="HostDB:ENSG00000109065"/>
<dbReference type="eggNOG" id="KOG4135">
    <property type="taxonomic scope" value="Eukaryota"/>
</dbReference>
<dbReference type="GeneTree" id="ENSGT00390000012745"/>
<dbReference type="InParanoid" id="Q9BTE0"/>
<dbReference type="OrthoDB" id="5043642at2759"/>
<dbReference type="PAN-GO" id="Q9BTE0">
    <property type="GO annotations" value="1 GO annotation based on evolutionary models"/>
</dbReference>
<dbReference type="PhylomeDB" id="Q9BTE0"/>
<dbReference type="TreeFam" id="TF315021"/>
<dbReference type="BioCyc" id="MetaCyc:ENSG00000109065-MONOMER"/>
<dbReference type="PathwayCommons" id="Q9BTE0"/>
<dbReference type="SignaLink" id="Q9BTE0"/>
<dbReference type="BioGRID-ORCS" id="26151">
    <property type="hits" value="8 hits in 1067 CRISPR screens"/>
</dbReference>
<dbReference type="ChiTaRS" id="NAT9">
    <property type="organism name" value="human"/>
</dbReference>
<dbReference type="GeneWiki" id="NAT9"/>
<dbReference type="GenomeRNAi" id="26151"/>
<dbReference type="Pharos" id="Q9BTE0">
    <property type="development level" value="Tbio"/>
</dbReference>
<dbReference type="PRO" id="PR:Q9BTE0"/>
<dbReference type="Proteomes" id="UP000005640">
    <property type="component" value="Chromosome 17"/>
</dbReference>
<dbReference type="RNAct" id="Q9BTE0">
    <property type="molecule type" value="protein"/>
</dbReference>
<dbReference type="Bgee" id="ENSG00000109065">
    <property type="expression patterns" value="Expressed in adenohypophysis and 197 other cell types or tissues"/>
</dbReference>
<dbReference type="ExpressionAtlas" id="Q9BTE0">
    <property type="expression patterns" value="baseline and differential"/>
</dbReference>
<dbReference type="GO" id="GO:0032991">
    <property type="term" value="C:protein-containing complex"/>
    <property type="evidence" value="ECO:0000314"/>
    <property type="project" value="LIFEdb"/>
</dbReference>
<dbReference type="GO" id="GO:0120519">
    <property type="term" value="F:tubulin N-terminal-methionine acetyltransferase activity"/>
    <property type="evidence" value="ECO:0007669"/>
    <property type="project" value="RHEA"/>
</dbReference>
<dbReference type="FunFam" id="3.40.630.30:FF:000040">
    <property type="entry name" value="N-acetyltransferase 9 (putative)"/>
    <property type="match status" value="1"/>
</dbReference>
<dbReference type="Gene3D" id="3.40.630.30">
    <property type="match status" value="1"/>
</dbReference>
<dbReference type="InterPro" id="IPR016181">
    <property type="entry name" value="Acyl_CoA_acyltransferase"/>
</dbReference>
<dbReference type="InterPro" id="IPR000182">
    <property type="entry name" value="GNAT_dom"/>
</dbReference>
<dbReference type="InterPro" id="IPR039135">
    <property type="entry name" value="NAT9-like"/>
</dbReference>
<dbReference type="PANTHER" id="PTHR13256:SF16">
    <property type="entry name" value="ALPHA_BETA-TUBULIN-N-ACETYLTRANSFERASE 9"/>
    <property type="match status" value="1"/>
</dbReference>
<dbReference type="PANTHER" id="PTHR13256">
    <property type="entry name" value="N-ACETYLTRANSFERASE 9"/>
    <property type="match status" value="1"/>
</dbReference>
<dbReference type="Pfam" id="PF13302">
    <property type="entry name" value="Acetyltransf_3"/>
    <property type="match status" value="1"/>
</dbReference>
<dbReference type="SUPFAM" id="SSF55729">
    <property type="entry name" value="Acyl-CoA N-acyltransferases (Nat)"/>
    <property type="match status" value="1"/>
</dbReference>
<name>NAT9_HUMAN</name>
<comment type="function">
    <text evidence="1">N-acetyltransferase that mediates the acetylation of the N-terminal residues of alpha- and beta-tubulin.</text>
</comment>
<comment type="catalytic activity">
    <reaction evidence="1">
        <text>N-terminal L-methionyl-[tubulin] + acetyl-CoA = N-terminal N(alpha)-acetyl-L-methionyl-[tubulin] + CoA + H(+)</text>
        <dbReference type="Rhea" id="RHEA:69607"/>
        <dbReference type="Rhea" id="RHEA-COMP:17729"/>
        <dbReference type="Rhea" id="RHEA-COMP:17730"/>
        <dbReference type="ChEBI" id="CHEBI:15378"/>
        <dbReference type="ChEBI" id="CHEBI:57287"/>
        <dbReference type="ChEBI" id="CHEBI:57288"/>
        <dbReference type="ChEBI" id="CHEBI:64731"/>
        <dbReference type="ChEBI" id="CHEBI:133414"/>
        <dbReference type="EC" id="2.3.1.308"/>
    </reaction>
</comment>
<comment type="interaction">
    <interactant intactId="EBI-711919">
        <id>Q9BTE0</id>
    </interactant>
    <interactant intactId="EBI-1048486">
        <id>O43324</id>
        <label>EEF1E1</label>
    </interactant>
    <organismsDiffer>false</organismsDiffer>
    <experiments>4</experiments>
</comment>
<comment type="alternative products">
    <event type="alternative splicing"/>
    <isoform>
        <id>Q9BTE0-1</id>
        <name>1</name>
        <sequence type="displayed"/>
    </isoform>
    <isoform>
        <id>Q9BTE0-2</id>
        <name>2</name>
        <sequence type="described" ref="VSP_025231"/>
    </isoform>
</comment>
<comment type="similarity">
    <text evidence="6">Belongs to the acetyltransferase family. GNAT subfamily.</text>
</comment>
<keyword id="KW-0012">Acyltransferase</keyword>
<keyword id="KW-0025">Alternative splicing</keyword>
<keyword id="KW-1267">Proteomics identification</keyword>
<keyword id="KW-1185">Reference proteome</keyword>
<keyword id="KW-0808">Transferase</keyword>
<evidence type="ECO:0000269" key="1">
    <source>
    </source>
</evidence>
<evidence type="ECO:0000303" key="2">
    <source>
    </source>
</evidence>
<evidence type="ECO:0000303" key="3">
    <source>
    </source>
</evidence>
<evidence type="ECO:0000303" key="4">
    <source>
    </source>
</evidence>
<evidence type="ECO:0000303" key="5">
    <source ref="1"/>
</evidence>
<evidence type="ECO:0000305" key="6"/>
<evidence type="ECO:0000305" key="7">
    <source>
    </source>
</evidence>
<sequence>MRLNQNTLLLGKKVVLVPYTSEHVPSRYHEWMKSEELQRLTASEPLTLEQEYAMQCSWQEDADKCTFIVLDAEKWQAQPGATEESCMVGDVNLFLTDLEDLTLGEIEVMIAEPSCRGKGLGTEAVLAMLSYGVTTLGLTKFEAKIGQGNEPSIRMFQKLHFEQVATSSVFQEVTLRLTVSESEHQWLLEQTSHVEEKPYRDGSAEPC</sequence>